<feature type="chain" id="PRO_0000293350" description="Small ribosomal subunit protein uS4">
    <location>
        <begin position="1"/>
        <end position="206"/>
    </location>
</feature>
<feature type="domain" description="S4 RNA-binding" evidence="1">
    <location>
        <begin position="94"/>
        <end position="154"/>
    </location>
</feature>
<feature type="region of interest" description="Disordered" evidence="2">
    <location>
        <begin position="15"/>
        <end position="46"/>
    </location>
</feature>
<sequence>MTKRTSAKYKIDRRMGENIWGRPKSPVNKREYGPGQHGQRRKNKLSDFGTQLRAKQKLKGYYGDLTEKQFRKIFAEAERVKGDTGEMLVGLLERRLDAIVYRAKFVPTIFAARQFVNHGHVTVNGQRVNIGSYRCKEGDVIQVREKSRQLALVLEATQLAERDVPDYIEVDYSKMTATFVRTPGLGDVPYPVQMEPNLVVEFYAKN</sequence>
<evidence type="ECO:0000255" key="1">
    <source>
        <dbReference type="HAMAP-Rule" id="MF_01306"/>
    </source>
</evidence>
<evidence type="ECO:0000256" key="2">
    <source>
        <dbReference type="SAM" id="MobiDB-lite"/>
    </source>
</evidence>
<evidence type="ECO:0000305" key="3"/>
<dbReference type="EMBL" id="CP000577">
    <property type="protein sequence ID" value="ABN76069.1"/>
    <property type="molecule type" value="Genomic_DNA"/>
</dbReference>
<dbReference type="RefSeq" id="WP_002719445.1">
    <property type="nucleotide sequence ID" value="NC_009049.1"/>
</dbReference>
<dbReference type="SMR" id="A3PIA3"/>
<dbReference type="GeneID" id="67446056"/>
<dbReference type="KEGG" id="rsh:Rsph17029_0958"/>
<dbReference type="HOGENOM" id="CLU_092403_0_0_5"/>
<dbReference type="GO" id="GO:0015935">
    <property type="term" value="C:small ribosomal subunit"/>
    <property type="evidence" value="ECO:0007669"/>
    <property type="project" value="InterPro"/>
</dbReference>
<dbReference type="GO" id="GO:0019843">
    <property type="term" value="F:rRNA binding"/>
    <property type="evidence" value="ECO:0007669"/>
    <property type="project" value="UniProtKB-UniRule"/>
</dbReference>
<dbReference type="GO" id="GO:0003735">
    <property type="term" value="F:structural constituent of ribosome"/>
    <property type="evidence" value="ECO:0007669"/>
    <property type="project" value="InterPro"/>
</dbReference>
<dbReference type="GO" id="GO:0042274">
    <property type="term" value="P:ribosomal small subunit biogenesis"/>
    <property type="evidence" value="ECO:0007669"/>
    <property type="project" value="TreeGrafter"/>
</dbReference>
<dbReference type="GO" id="GO:0006412">
    <property type="term" value="P:translation"/>
    <property type="evidence" value="ECO:0007669"/>
    <property type="project" value="UniProtKB-UniRule"/>
</dbReference>
<dbReference type="CDD" id="cd00165">
    <property type="entry name" value="S4"/>
    <property type="match status" value="1"/>
</dbReference>
<dbReference type="FunFam" id="3.10.290.10:FF:000001">
    <property type="entry name" value="30S ribosomal protein S4"/>
    <property type="match status" value="1"/>
</dbReference>
<dbReference type="Gene3D" id="1.10.1050.10">
    <property type="entry name" value="Ribosomal Protein S4 Delta 41, Chain A, domain 1"/>
    <property type="match status" value="1"/>
</dbReference>
<dbReference type="Gene3D" id="3.10.290.10">
    <property type="entry name" value="RNA-binding S4 domain"/>
    <property type="match status" value="1"/>
</dbReference>
<dbReference type="HAMAP" id="MF_01306_B">
    <property type="entry name" value="Ribosomal_uS4_B"/>
    <property type="match status" value="1"/>
</dbReference>
<dbReference type="InterPro" id="IPR022801">
    <property type="entry name" value="Ribosomal_uS4"/>
</dbReference>
<dbReference type="InterPro" id="IPR005709">
    <property type="entry name" value="Ribosomal_uS4_bac-type"/>
</dbReference>
<dbReference type="InterPro" id="IPR018079">
    <property type="entry name" value="Ribosomal_uS4_CS"/>
</dbReference>
<dbReference type="InterPro" id="IPR001912">
    <property type="entry name" value="Ribosomal_uS4_N"/>
</dbReference>
<dbReference type="InterPro" id="IPR002942">
    <property type="entry name" value="S4_RNA-bd"/>
</dbReference>
<dbReference type="InterPro" id="IPR036986">
    <property type="entry name" value="S4_RNA-bd_sf"/>
</dbReference>
<dbReference type="NCBIfam" id="NF003717">
    <property type="entry name" value="PRK05327.1"/>
    <property type="match status" value="1"/>
</dbReference>
<dbReference type="NCBIfam" id="TIGR01017">
    <property type="entry name" value="rpsD_bact"/>
    <property type="match status" value="1"/>
</dbReference>
<dbReference type="PANTHER" id="PTHR11831">
    <property type="entry name" value="30S 40S RIBOSOMAL PROTEIN"/>
    <property type="match status" value="1"/>
</dbReference>
<dbReference type="PANTHER" id="PTHR11831:SF4">
    <property type="entry name" value="SMALL RIBOSOMAL SUBUNIT PROTEIN US4M"/>
    <property type="match status" value="1"/>
</dbReference>
<dbReference type="Pfam" id="PF00163">
    <property type="entry name" value="Ribosomal_S4"/>
    <property type="match status" value="1"/>
</dbReference>
<dbReference type="Pfam" id="PF01479">
    <property type="entry name" value="S4"/>
    <property type="match status" value="1"/>
</dbReference>
<dbReference type="SMART" id="SM01390">
    <property type="entry name" value="Ribosomal_S4"/>
    <property type="match status" value="1"/>
</dbReference>
<dbReference type="SMART" id="SM00363">
    <property type="entry name" value="S4"/>
    <property type="match status" value="1"/>
</dbReference>
<dbReference type="SUPFAM" id="SSF55174">
    <property type="entry name" value="Alpha-L RNA-binding motif"/>
    <property type="match status" value="1"/>
</dbReference>
<dbReference type="PROSITE" id="PS00632">
    <property type="entry name" value="RIBOSOMAL_S4"/>
    <property type="match status" value="1"/>
</dbReference>
<dbReference type="PROSITE" id="PS50889">
    <property type="entry name" value="S4"/>
    <property type="match status" value="1"/>
</dbReference>
<protein>
    <recommendedName>
        <fullName evidence="1">Small ribosomal subunit protein uS4</fullName>
    </recommendedName>
    <alternativeName>
        <fullName evidence="3">30S ribosomal protein S4</fullName>
    </alternativeName>
</protein>
<gene>
    <name evidence="1" type="primary">rpsD</name>
    <name type="ordered locus">Rsph17029_0958</name>
</gene>
<name>RS4_CERS1</name>
<proteinExistence type="inferred from homology"/>
<reference key="1">
    <citation type="submission" date="2007-02" db="EMBL/GenBank/DDBJ databases">
        <title>Complete sequence of chromosome 1 of Rhodobacter sphaeroides ATCC 17029.</title>
        <authorList>
            <person name="Copeland A."/>
            <person name="Lucas S."/>
            <person name="Lapidus A."/>
            <person name="Barry K."/>
            <person name="Detter J.C."/>
            <person name="Glavina del Rio T."/>
            <person name="Hammon N."/>
            <person name="Israni S."/>
            <person name="Dalin E."/>
            <person name="Tice H."/>
            <person name="Pitluck S."/>
            <person name="Kiss H."/>
            <person name="Brettin T."/>
            <person name="Bruce D."/>
            <person name="Han C."/>
            <person name="Tapia R."/>
            <person name="Gilna P."/>
            <person name="Schmutz J."/>
            <person name="Larimer F."/>
            <person name="Land M."/>
            <person name="Hauser L."/>
            <person name="Kyrpides N."/>
            <person name="Mikhailova N."/>
            <person name="Richardson P."/>
            <person name="Mackenzie C."/>
            <person name="Choudhary M."/>
            <person name="Donohue T.J."/>
            <person name="Kaplan S."/>
        </authorList>
    </citation>
    <scope>NUCLEOTIDE SEQUENCE [LARGE SCALE GENOMIC DNA]</scope>
    <source>
        <strain>ATCC 17029 / ATH 2.4.9</strain>
    </source>
</reference>
<accession>A3PIA3</accession>
<organism>
    <name type="scientific">Cereibacter sphaeroides (strain ATCC 17029 / ATH 2.4.9)</name>
    <name type="common">Rhodobacter sphaeroides</name>
    <dbReference type="NCBI Taxonomy" id="349101"/>
    <lineage>
        <taxon>Bacteria</taxon>
        <taxon>Pseudomonadati</taxon>
        <taxon>Pseudomonadota</taxon>
        <taxon>Alphaproteobacteria</taxon>
        <taxon>Rhodobacterales</taxon>
        <taxon>Paracoccaceae</taxon>
        <taxon>Cereibacter</taxon>
    </lineage>
</organism>
<comment type="function">
    <text evidence="1">One of the primary rRNA binding proteins, it binds directly to 16S rRNA where it nucleates assembly of the body of the 30S subunit.</text>
</comment>
<comment type="function">
    <text evidence="1">With S5 and S12 plays an important role in translational accuracy.</text>
</comment>
<comment type="subunit">
    <text evidence="1">Part of the 30S ribosomal subunit. Contacts protein S5. The interaction surface between S4 and S5 is involved in control of translational fidelity.</text>
</comment>
<comment type="similarity">
    <text evidence="1">Belongs to the universal ribosomal protein uS4 family.</text>
</comment>
<keyword id="KW-0687">Ribonucleoprotein</keyword>
<keyword id="KW-0689">Ribosomal protein</keyword>
<keyword id="KW-0694">RNA-binding</keyword>
<keyword id="KW-0699">rRNA-binding</keyword>